<accession>A1UZX6</accession>
<reference key="1">
    <citation type="journal article" date="2010" name="Genome Biol. Evol.">
        <title>Continuing evolution of Burkholderia mallei through genome reduction and large-scale rearrangements.</title>
        <authorList>
            <person name="Losada L."/>
            <person name="Ronning C.M."/>
            <person name="DeShazer D."/>
            <person name="Woods D."/>
            <person name="Fedorova N."/>
            <person name="Kim H.S."/>
            <person name="Shabalina S.A."/>
            <person name="Pearson T.R."/>
            <person name="Brinkac L."/>
            <person name="Tan P."/>
            <person name="Nandi T."/>
            <person name="Crabtree J."/>
            <person name="Badger J."/>
            <person name="Beckstrom-Sternberg S."/>
            <person name="Saqib M."/>
            <person name="Schutzer S.E."/>
            <person name="Keim P."/>
            <person name="Nierman W.C."/>
        </authorList>
    </citation>
    <scope>NUCLEOTIDE SEQUENCE [LARGE SCALE GENOMIC DNA]</scope>
    <source>
        <strain>SAVP1</strain>
    </source>
</reference>
<protein>
    <recommendedName>
        <fullName evidence="1">Protein-export protein SecB</fullName>
    </recommendedName>
</protein>
<name>SECB_BURMS</name>
<keyword id="KW-0143">Chaperone</keyword>
<keyword id="KW-0963">Cytoplasm</keyword>
<keyword id="KW-0653">Protein transport</keyword>
<keyword id="KW-0811">Translocation</keyword>
<keyword id="KW-0813">Transport</keyword>
<gene>
    <name evidence="1" type="primary">secB</name>
    <name type="ordered locus">BMASAVP1_A0178</name>
</gene>
<organism>
    <name type="scientific">Burkholderia mallei (strain SAVP1)</name>
    <dbReference type="NCBI Taxonomy" id="320388"/>
    <lineage>
        <taxon>Bacteria</taxon>
        <taxon>Pseudomonadati</taxon>
        <taxon>Pseudomonadota</taxon>
        <taxon>Betaproteobacteria</taxon>
        <taxon>Burkholderiales</taxon>
        <taxon>Burkholderiaceae</taxon>
        <taxon>Burkholderia</taxon>
        <taxon>pseudomallei group</taxon>
    </lineage>
</organism>
<dbReference type="EMBL" id="CP000526">
    <property type="protein sequence ID" value="ABM50100.1"/>
    <property type="molecule type" value="Genomic_DNA"/>
</dbReference>
<dbReference type="RefSeq" id="WP_004198004.1">
    <property type="nucleotide sequence ID" value="NC_008785.1"/>
</dbReference>
<dbReference type="SMR" id="A1UZX6"/>
<dbReference type="GeneID" id="93058964"/>
<dbReference type="KEGG" id="bmv:BMASAVP1_A0178"/>
<dbReference type="HOGENOM" id="CLU_111574_1_0_4"/>
<dbReference type="GO" id="GO:0005737">
    <property type="term" value="C:cytoplasm"/>
    <property type="evidence" value="ECO:0007669"/>
    <property type="project" value="UniProtKB-SubCell"/>
</dbReference>
<dbReference type="GO" id="GO:0051082">
    <property type="term" value="F:unfolded protein binding"/>
    <property type="evidence" value="ECO:0007669"/>
    <property type="project" value="InterPro"/>
</dbReference>
<dbReference type="GO" id="GO:0006457">
    <property type="term" value="P:protein folding"/>
    <property type="evidence" value="ECO:0007669"/>
    <property type="project" value="UniProtKB-UniRule"/>
</dbReference>
<dbReference type="GO" id="GO:0051262">
    <property type="term" value="P:protein tetramerization"/>
    <property type="evidence" value="ECO:0007669"/>
    <property type="project" value="InterPro"/>
</dbReference>
<dbReference type="GO" id="GO:0015031">
    <property type="term" value="P:protein transport"/>
    <property type="evidence" value="ECO:0007669"/>
    <property type="project" value="UniProtKB-UniRule"/>
</dbReference>
<dbReference type="Gene3D" id="3.10.420.10">
    <property type="entry name" value="SecB-like"/>
    <property type="match status" value="1"/>
</dbReference>
<dbReference type="HAMAP" id="MF_00821">
    <property type="entry name" value="SecB"/>
    <property type="match status" value="1"/>
</dbReference>
<dbReference type="InterPro" id="IPR003708">
    <property type="entry name" value="SecB"/>
</dbReference>
<dbReference type="InterPro" id="IPR035958">
    <property type="entry name" value="SecB-like_sf"/>
</dbReference>
<dbReference type="NCBIfam" id="NF004392">
    <property type="entry name" value="PRK05751.1-3"/>
    <property type="match status" value="1"/>
</dbReference>
<dbReference type="NCBIfam" id="NF004394">
    <property type="entry name" value="PRK05751.1-5"/>
    <property type="match status" value="1"/>
</dbReference>
<dbReference type="NCBIfam" id="TIGR00809">
    <property type="entry name" value="secB"/>
    <property type="match status" value="1"/>
</dbReference>
<dbReference type="PANTHER" id="PTHR36918">
    <property type="match status" value="1"/>
</dbReference>
<dbReference type="PANTHER" id="PTHR36918:SF1">
    <property type="entry name" value="PROTEIN-EXPORT PROTEIN SECB"/>
    <property type="match status" value="1"/>
</dbReference>
<dbReference type="Pfam" id="PF02556">
    <property type="entry name" value="SecB"/>
    <property type="match status" value="1"/>
</dbReference>
<dbReference type="PRINTS" id="PR01594">
    <property type="entry name" value="SECBCHAPRONE"/>
</dbReference>
<dbReference type="SUPFAM" id="SSF54611">
    <property type="entry name" value="SecB-like"/>
    <property type="match status" value="1"/>
</dbReference>
<proteinExistence type="inferred from homology"/>
<comment type="function">
    <text evidence="1">One of the proteins required for the normal export of preproteins out of the cell cytoplasm. It is a molecular chaperone that binds to a subset of precursor proteins, maintaining them in a translocation-competent state. It also specifically binds to its receptor SecA.</text>
</comment>
<comment type="subunit">
    <text evidence="1">Homotetramer, a dimer of dimers. One homotetramer interacts with 1 SecA dimer.</text>
</comment>
<comment type="subcellular location">
    <subcellularLocation>
        <location evidence="1">Cytoplasm</location>
    </subcellularLocation>
</comment>
<comment type="similarity">
    <text evidence="1">Belongs to the SecB family.</text>
</comment>
<sequence length="159" mass="17671">MSDVENQPFFNIQRIYLKDLSLEQPNSPAIFLEQEMPAVEVEVDVKAERLAENVYEIVVAGTVTAKVREKVAFLVEAKQAGIFDIRNIPAEQIDPLCGIACPTILFPYLRSNIADSITRAGFPPIHLAEINFQALYEQRLAEISQQQQQGGAPNGTTLN</sequence>
<evidence type="ECO:0000255" key="1">
    <source>
        <dbReference type="HAMAP-Rule" id="MF_00821"/>
    </source>
</evidence>
<feature type="chain" id="PRO_1000062462" description="Protein-export protein SecB">
    <location>
        <begin position="1"/>
        <end position="159"/>
    </location>
</feature>